<accession>O63851</accession>
<geneLocation type="mitochondrion"/>
<organism>
    <name type="scientific">Sarcophyton glaucum</name>
    <name type="common">Toadstool umbrella leather coral</name>
    <dbReference type="NCBI Taxonomy" id="70919"/>
    <lineage>
        <taxon>Eukaryota</taxon>
        <taxon>Metazoa</taxon>
        <taxon>Cnidaria</taxon>
        <taxon>Anthozoa</taxon>
        <taxon>Octocorallia</taxon>
        <taxon>Malacalcyonacea</taxon>
        <taxon>Alcyoniidae</taxon>
        <taxon>Sarcophyton</taxon>
    </lineage>
</organism>
<proteinExistence type="inferred from homology"/>
<comment type="function">
    <text evidence="1">Core subunit of the mitochondrial membrane respiratory chain NADH dehydrogenase (Complex I) that is believed to belong to the minimal assembly required for catalysis. Complex I functions in the transfer of electrons from NADH to the respiratory chain. The immediate electron acceptor for the enzyme is believed to be ubiquinone (By similarity).</text>
</comment>
<comment type="catalytic activity">
    <reaction>
        <text>a ubiquinone + NADH + 5 H(+)(in) = a ubiquinol + NAD(+) + 4 H(+)(out)</text>
        <dbReference type="Rhea" id="RHEA:29091"/>
        <dbReference type="Rhea" id="RHEA-COMP:9565"/>
        <dbReference type="Rhea" id="RHEA-COMP:9566"/>
        <dbReference type="ChEBI" id="CHEBI:15378"/>
        <dbReference type="ChEBI" id="CHEBI:16389"/>
        <dbReference type="ChEBI" id="CHEBI:17976"/>
        <dbReference type="ChEBI" id="CHEBI:57540"/>
        <dbReference type="ChEBI" id="CHEBI:57945"/>
        <dbReference type="EC" id="7.1.1.2"/>
    </reaction>
</comment>
<comment type="subcellular location">
    <subcellularLocation>
        <location evidence="1">Mitochondrion membrane</location>
        <topology evidence="1">Multi-pass membrane protein</topology>
    </subcellularLocation>
</comment>
<comment type="similarity">
    <text evidence="3">Belongs to the complex I subunit 4L family.</text>
</comment>
<sequence>MSYLILSIVILLIGILGIILNRSNLIIMLMCVELVLLASTILLLFESRVLYTLFGQIFAIVILTVAAAESAIGLAIMVNYYRLRGTIAVRASNLLRG</sequence>
<feature type="chain" id="PRO_0000118487" description="NADH-ubiquinone oxidoreductase chain 4L">
    <location>
        <begin position="1"/>
        <end position="97"/>
    </location>
</feature>
<feature type="transmembrane region" description="Helical" evidence="2">
    <location>
        <begin position="1"/>
        <end position="21"/>
    </location>
</feature>
<feature type="transmembrane region" description="Helical" evidence="2">
    <location>
        <begin position="25"/>
        <end position="45"/>
    </location>
</feature>
<feature type="transmembrane region" description="Helical" evidence="2">
    <location>
        <begin position="57"/>
        <end position="77"/>
    </location>
</feature>
<evidence type="ECO:0000250" key="1"/>
<evidence type="ECO:0000255" key="2"/>
<evidence type="ECO:0000305" key="3"/>
<name>NU4LM_SARGL</name>
<protein>
    <recommendedName>
        <fullName>NADH-ubiquinone oxidoreductase chain 4L</fullName>
        <ecNumber>7.1.1.2</ecNumber>
    </recommendedName>
    <alternativeName>
        <fullName>NADH dehydrogenase subunit 4L</fullName>
    </alternativeName>
</protein>
<dbReference type="EC" id="7.1.1.2"/>
<dbReference type="EMBL" id="AF063191">
    <property type="protein sequence ID" value="AAC16385.1"/>
    <property type="molecule type" value="Genomic_DNA"/>
</dbReference>
<dbReference type="SMR" id="O63851"/>
<dbReference type="GO" id="GO:0031966">
    <property type="term" value="C:mitochondrial membrane"/>
    <property type="evidence" value="ECO:0007669"/>
    <property type="project" value="UniProtKB-SubCell"/>
</dbReference>
<dbReference type="GO" id="GO:0030964">
    <property type="term" value="C:NADH dehydrogenase complex"/>
    <property type="evidence" value="ECO:0007669"/>
    <property type="project" value="TreeGrafter"/>
</dbReference>
<dbReference type="GO" id="GO:0008137">
    <property type="term" value="F:NADH dehydrogenase (ubiquinone) activity"/>
    <property type="evidence" value="ECO:0007669"/>
    <property type="project" value="UniProtKB-EC"/>
</dbReference>
<dbReference type="GO" id="GO:0042773">
    <property type="term" value="P:ATP synthesis coupled electron transport"/>
    <property type="evidence" value="ECO:0007669"/>
    <property type="project" value="InterPro"/>
</dbReference>
<dbReference type="Gene3D" id="1.10.287.3510">
    <property type="match status" value="1"/>
</dbReference>
<dbReference type="HAMAP" id="MF_01456">
    <property type="entry name" value="NDH1_NuoK"/>
    <property type="match status" value="1"/>
</dbReference>
<dbReference type="InterPro" id="IPR001133">
    <property type="entry name" value="NADH_UbQ_OxRdtase_chain4L/K"/>
</dbReference>
<dbReference type="InterPro" id="IPR039428">
    <property type="entry name" value="NUOK/Mnh_C1-like"/>
</dbReference>
<dbReference type="NCBIfam" id="NF004320">
    <property type="entry name" value="PRK05715.1-2"/>
    <property type="match status" value="1"/>
</dbReference>
<dbReference type="NCBIfam" id="NF004323">
    <property type="entry name" value="PRK05715.1-5"/>
    <property type="match status" value="1"/>
</dbReference>
<dbReference type="PANTHER" id="PTHR11434:SF16">
    <property type="entry name" value="NADH-UBIQUINONE OXIDOREDUCTASE CHAIN 4L"/>
    <property type="match status" value="1"/>
</dbReference>
<dbReference type="PANTHER" id="PTHR11434">
    <property type="entry name" value="NADH-UBIQUINONE OXIDOREDUCTASE SUBUNIT ND4L"/>
    <property type="match status" value="1"/>
</dbReference>
<dbReference type="Pfam" id="PF00420">
    <property type="entry name" value="Oxidored_q2"/>
    <property type="match status" value="1"/>
</dbReference>
<reference key="1">
    <citation type="journal article" date="1998" name="J. Mol. Evol.">
        <title>Mitochondrial DNA of the coral Sarcophyton glaucum contains a gene for a homologue of bacterial MutS: a possible case of gene transfer from the nucleus to the mitochondrion.</title>
        <authorList>
            <person name="Pont-Kingdon G."/>
            <person name="Okada N.A."/>
            <person name="Macfarlane J.L."/>
            <person name="Beagley C.T."/>
            <person name="Watkins-Sims C.D."/>
            <person name="Cavalier-Smith T."/>
            <person name="Clark-Walker G.D."/>
            <person name="Wolstenholme D.R."/>
        </authorList>
    </citation>
    <scope>NUCLEOTIDE SEQUENCE [GENOMIC DNA]</scope>
</reference>
<keyword id="KW-0249">Electron transport</keyword>
<keyword id="KW-0472">Membrane</keyword>
<keyword id="KW-0496">Mitochondrion</keyword>
<keyword id="KW-0520">NAD</keyword>
<keyword id="KW-0679">Respiratory chain</keyword>
<keyword id="KW-1278">Translocase</keyword>
<keyword id="KW-0812">Transmembrane</keyword>
<keyword id="KW-1133">Transmembrane helix</keyword>
<keyword id="KW-0813">Transport</keyword>
<keyword id="KW-0830">Ubiquinone</keyword>
<gene>
    <name type="primary">ND4L</name>
</gene>